<sequence>MPKMKTKSSAKKRFKVTATGKVMAGQAGKRHGMIKRTTKFIRDARGTTTLSAPDAKIVKGYMPYDR</sequence>
<organism>
    <name type="scientific">Ruegeria pomeroyi (strain ATCC 700808 / DSM 15171 / DSS-3)</name>
    <name type="common">Silicibacter pomeroyi</name>
    <dbReference type="NCBI Taxonomy" id="246200"/>
    <lineage>
        <taxon>Bacteria</taxon>
        <taxon>Pseudomonadati</taxon>
        <taxon>Pseudomonadota</taxon>
        <taxon>Alphaproteobacteria</taxon>
        <taxon>Rhodobacterales</taxon>
        <taxon>Roseobacteraceae</taxon>
        <taxon>Ruegeria</taxon>
    </lineage>
</organism>
<keyword id="KW-1185">Reference proteome</keyword>
<keyword id="KW-0687">Ribonucleoprotein</keyword>
<keyword id="KW-0689">Ribosomal protein</keyword>
<protein>
    <recommendedName>
        <fullName evidence="1">Large ribosomal subunit protein bL35</fullName>
    </recommendedName>
    <alternativeName>
        <fullName evidence="2">50S ribosomal protein L35</fullName>
    </alternativeName>
</protein>
<accession>Q5LMG4</accession>
<comment type="similarity">
    <text evidence="1">Belongs to the bacterial ribosomal protein bL35 family.</text>
</comment>
<proteinExistence type="inferred from homology"/>
<gene>
    <name evidence="1" type="primary">rpmI</name>
    <name type="ordered locus">SPO3599</name>
</gene>
<dbReference type="EMBL" id="CP000031">
    <property type="protein sequence ID" value="AAV97119.1"/>
    <property type="molecule type" value="Genomic_DNA"/>
</dbReference>
<dbReference type="RefSeq" id="WP_011049279.1">
    <property type="nucleotide sequence ID" value="NC_003911.12"/>
</dbReference>
<dbReference type="SMR" id="Q5LMG4"/>
<dbReference type="STRING" id="246200.SPO3599"/>
<dbReference type="PaxDb" id="246200-SPO3599"/>
<dbReference type="KEGG" id="sil:SPO3599"/>
<dbReference type="eggNOG" id="COG0291">
    <property type="taxonomic scope" value="Bacteria"/>
</dbReference>
<dbReference type="HOGENOM" id="CLU_169643_2_1_5"/>
<dbReference type="OrthoDB" id="9804851at2"/>
<dbReference type="Proteomes" id="UP000001023">
    <property type="component" value="Chromosome"/>
</dbReference>
<dbReference type="GO" id="GO:0022625">
    <property type="term" value="C:cytosolic large ribosomal subunit"/>
    <property type="evidence" value="ECO:0007669"/>
    <property type="project" value="TreeGrafter"/>
</dbReference>
<dbReference type="GO" id="GO:0003735">
    <property type="term" value="F:structural constituent of ribosome"/>
    <property type="evidence" value="ECO:0007669"/>
    <property type="project" value="InterPro"/>
</dbReference>
<dbReference type="GO" id="GO:0006412">
    <property type="term" value="P:translation"/>
    <property type="evidence" value="ECO:0007669"/>
    <property type="project" value="UniProtKB-UniRule"/>
</dbReference>
<dbReference type="FunFam" id="4.10.410.60:FF:000001">
    <property type="entry name" value="50S ribosomal protein L35"/>
    <property type="match status" value="1"/>
</dbReference>
<dbReference type="Gene3D" id="4.10.410.60">
    <property type="match status" value="1"/>
</dbReference>
<dbReference type="HAMAP" id="MF_00514">
    <property type="entry name" value="Ribosomal_bL35"/>
    <property type="match status" value="1"/>
</dbReference>
<dbReference type="InterPro" id="IPR001706">
    <property type="entry name" value="Ribosomal_bL35"/>
</dbReference>
<dbReference type="InterPro" id="IPR021137">
    <property type="entry name" value="Ribosomal_bL35-like"/>
</dbReference>
<dbReference type="InterPro" id="IPR018265">
    <property type="entry name" value="Ribosomal_bL35_CS"/>
</dbReference>
<dbReference type="InterPro" id="IPR037229">
    <property type="entry name" value="Ribosomal_bL35_sf"/>
</dbReference>
<dbReference type="NCBIfam" id="TIGR00001">
    <property type="entry name" value="rpmI_bact"/>
    <property type="match status" value="1"/>
</dbReference>
<dbReference type="PANTHER" id="PTHR33343">
    <property type="entry name" value="54S RIBOSOMAL PROTEIN BL35M"/>
    <property type="match status" value="1"/>
</dbReference>
<dbReference type="PANTHER" id="PTHR33343:SF1">
    <property type="entry name" value="LARGE RIBOSOMAL SUBUNIT PROTEIN BL35M"/>
    <property type="match status" value="1"/>
</dbReference>
<dbReference type="Pfam" id="PF01632">
    <property type="entry name" value="Ribosomal_L35p"/>
    <property type="match status" value="1"/>
</dbReference>
<dbReference type="PRINTS" id="PR00064">
    <property type="entry name" value="RIBOSOMALL35"/>
</dbReference>
<dbReference type="SUPFAM" id="SSF143034">
    <property type="entry name" value="L35p-like"/>
    <property type="match status" value="1"/>
</dbReference>
<dbReference type="PROSITE" id="PS00936">
    <property type="entry name" value="RIBOSOMAL_L35"/>
    <property type="match status" value="1"/>
</dbReference>
<evidence type="ECO:0000255" key="1">
    <source>
        <dbReference type="HAMAP-Rule" id="MF_00514"/>
    </source>
</evidence>
<evidence type="ECO:0000305" key="2"/>
<reference key="1">
    <citation type="journal article" date="2004" name="Nature">
        <title>Genome sequence of Silicibacter pomeroyi reveals adaptations to the marine environment.</title>
        <authorList>
            <person name="Moran M.A."/>
            <person name="Buchan A."/>
            <person name="Gonzalez J.M."/>
            <person name="Heidelberg J.F."/>
            <person name="Whitman W.B."/>
            <person name="Kiene R.P."/>
            <person name="Henriksen J.R."/>
            <person name="King G.M."/>
            <person name="Belas R."/>
            <person name="Fuqua C."/>
            <person name="Brinkac L.M."/>
            <person name="Lewis M."/>
            <person name="Johri S."/>
            <person name="Weaver B."/>
            <person name="Pai G."/>
            <person name="Eisen J.A."/>
            <person name="Rahe E."/>
            <person name="Sheldon W.M."/>
            <person name="Ye W."/>
            <person name="Miller T.R."/>
            <person name="Carlton J."/>
            <person name="Rasko D.A."/>
            <person name="Paulsen I.T."/>
            <person name="Ren Q."/>
            <person name="Daugherty S.C."/>
            <person name="DeBoy R.T."/>
            <person name="Dodson R.J."/>
            <person name="Durkin A.S."/>
            <person name="Madupu R."/>
            <person name="Nelson W.C."/>
            <person name="Sullivan S.A."/>
            <person name="Rosovitz M.J."/>
            <person name="Haft D.H."/>
            <person name="Selengut J."/>
            <person name="Ward N."/>
        </authorList>
    </citation>
    <scope>NUCLEOTIDE SEQUENCE [LARGE SCALE GENOMIC DNA]</scope>
    <source>
        <strain>ATCC 700808 / DSM 15171 / DSS-3</strain>
    </source>
</reference>
<reference key="2">
    <citation type="journal article" date="2014" name="Stand. Genomic Sci.">
        <title>An updated genome annotation for the model marine bacterium Ruegeria pomeroyi DSS-3.</title>
        <authorList>
            <person name="Rivers A.R."/>
            <person name="Smith C.B."/>
            <person name="Moran M.A."/>
        </authorList>
    </citation>
    <scope>GENOME REANNOTATION</scope>
    <source>
        <strain>ATCC 700808 / DSM 15171 / DSS-3</strain>
    </source>
</reference>
<name>RL35_RUEPO</name>
<feature type="chain" id="PRO_0000258754" description="Large ribosomal subunit protein bL35">
    <location>
        <begin position="1"/>
        <end position="66"/>
    </location>
</feature>